<keyword id="KW-0175">Coiled coil</keyword>
<keyword id="KW-1017">Isopeptide bond</keyword>
<keyword id="KW-0507">mRNA processing</keyword>
<keyword id="KW-0508">mRNA splicing</keyword>
<keyword id="KW-0539">Nucleus</keyword>
<keyword id="KW-0597">Phosphoprotein</keyword>
<keyword id="KW-1185">Reference proteome</keyword>
<keyword id="KW-0694">RNA-binding</keyword>
<keyword id="KW-0832">Ubl conjugation</keyword>
<protein>
    <recommendedName>
        <fullName>Nuclear speckle splicing regulatory protein 1</fullName>
    </recommendedName>
    <alternativeName>
        <fullName>Coiled-coil domain-containing protein 55</fullName>
    </alternativeName>
    <alternativeName>
        <fullName>Nuclear speckle-related protein 70</fullName>
        <shortName>NSrp70</shortName>
    </alternativeName>
</protein>
<comment type="function">
    <text evidence="1">RNA-binding protein that mediates pre-mRNA alternative splicing regulation.</text>
</comment>
<comment type="subunit">
    <text evidence="1">Interacts (via C-terminus) with SRSF1. Interacts (via C-terminus) with SRSF2 (By similarity).</text>
</comment>
<comment type="subcellular location">
    <subcellularLocation>
        <location evidence="1">Nucleus</location>
    </subcellularLocation>
    <subcellularLocation>
        <location evidence="1">Nucleus speckle</location>
    </subcellularLocation>
    <text evidence="1">Colocalizes with splicing factors SRSF1 and SRSF2 in speckles.</text>
</comment>
<comment type="similarity">
    <text evidence="6">Belongs to the NSRP1 family.</text>
</comment>
<feature type="chain" id="PRO_0000240433" description="Nuclear speckle splicing regulatory protein 1">
    <location>
        <begin position="1"/>
        <end position="559"/>
    </location>
</feature>
<feature type="region of interest" description="Disordered" evidence="5">
    <location>
        <begin position="22"/>
        <end position="57"/>
    </location>
</feature>
<feature type="region of interest" description="Necessary for alternative splicing activity" evidence="1">
    <location>
        <begin position="107"/>
        <end position="171"/>
    </location>
</feature>
<feature type="region of interest" description="Disordered" evidence="5">
    <location>
        <begin position="195"/>
        <end position="534"/>
    </location>
</feature>
<feature type="coiled-coil region" evidence="4">
    <location>
        <begin position="105"/>
        <end position="179"/>
    </location>
</feature>
<feature type="coiled-coil region" evidence="4">
    <location>
        <begin position="379"/>
        <end position="428"/>
    </location>
</feature>
<feature type="compositionally biased region" description="Acidic residues" evidence="5">
    <location>
        <begin position="32"/>
        <end position="41"/>
    </location>
</feature>
<feature type="compositionally biased region" description="Basic and acidic residues" evidence="5">
    <location>
        <begin position="204"/>
        <end position="219"/>
    </location>
</feature>
<feature type="compositionally biased region" description="Basic and acidic residues" evidence="5">
    <location>
        <begin position="251"/>
        <end position="274"/>
    </location>
</feature>
<feature type="compositionally biased region" description="Basic and acidic residues" evidence="5">
    <location>
        <begin position="314"/>
        <end position="343"/>
    </location>
</feature>
<feature type="compositionally biased region" description="Basic and acidic residues" evidence="5">
    <location>
        <begin position="351"/>
        <end position="488"/>
    </location>
</feature>
<feature type="compositionally biased region" description="Basic and acidic residues" evidence="5">
    <location>
        <begin position="502"/>
        <end position="521"/>
    </location>
</feature>
<feature type="modified residue" description="Phosphoserine" evidence="3">
    <location>
        <position position="27"/>
    </location>
</feature>
<feature type="modified residue" description="Phosphoserine" evidence="3">
    <location>
        <position position="33"/>
    </location>
</feature>
<feature type="modified residue" description="Phosphoserine" evidence="3">
    <location>
        <position position="249"/>
    </location>
</feature>
<feature type="modified residue" description="Phosphoserine" evidence="3">
    <location>
        <position position="255"/>
    </location>
</feature>
<feature type="modified residue" description="Phosphoserine" evidence="3">
    <location>
        <position position="256"/>
    </location>
</feature>
<feature type="modified residue" description="Phosphothreonine" evidence="3">
    <location>
        <position position="276"/>
    </location>
</feature>
<feature type="modified residue" description="Phosphoserine" evidence="2">
    <location>
        <position position="458"/>
    </location>
</feature>
<feature type="cross-link" description="Glycyl lysine isopeptide (Lys-Gly) (interchain with G-Cter in SUMO2)" evidence="3">
    <location>
        <position position="211"/>
    </location>
</feature>
<feature type="cross-link" description="Glycyl lysine isopeptide (Lys-Gly) (interchain with G-Cter in SUMO2)" evidence="3">
    <location>
        <position position="282"/>
    </location>
</feature>
<sequence length="559" mass="66431">MAIPGRQYGLILPKKAQQLHPVLQKPSVFGNDSDDDDDETSVSESLQREAAKKQAMKQTKLEIQKALAEDSTVYEYDSIYDEMQKKKEESNPKLLLGKDRKPKYIHNLLKAVEIRKKEQEKRMEKKIQREREMEKGEFDDKEAFVTSAYKKKLQERAEEEERERRAAALEARLDVTKQRDLSGFYRHLLNQAVGEEEVPTCSFREARSEIKEEKSKGYSDEVSSESRIPPENCIRQTGVKVEENPDADSDFDAKSSENDEMEGDKGNCRREKGTETLSSHSKHHRNPARSPSSSEEREHGTQCHTKSSRSRGHEKREDEHQERPAREQDSYHTDRDSRKEKRDSHRHRESSHRDSHWKRHEEERLRGRDERERNDREWKREKDREKYPSREQERHRQRNNYDRHNEKGCEKEEKSKEKEEHVKARKERYENSDKYRDREKREVSVESSERNRDRKESSPNSRAKDRFVNQERASKMRDMEKDKERNPEKPSSSEASLGAKHRITEECQETGKEQERLHETVNKFAKRSNEETVTSARDRYLARQMARINAKTYIEKEDD</sequence>
<organism>
    <name type="scientific">Bos taurus</name>
    <name type="common">Bovine</name>
    <dbReference type="NCBI Taxonomy" id="9913"/>
    <lineage>
        <taxon>Eukaryota</taxon>
        <taxon>Metazoa</taxon>
        <taxon>Chordata</taxon>
        <taxon>Craniata</taxon>
        <taxon>Vertebrata</taxon>
        <taxon>Euteleostomi</taxon>
        <taxon>Mammalia</taxon>
        <taxon>Eutheria</taxon>
        <taxon>Laurasiatheria</taxon>
        <taxon>Artiodactyla</taxon>
        <taxon>Ruminantia</taxon>
        <taxon>Pecora</taxon>
        <taxon>Bovidae</taxon>
        <taxon>Bovinae</taxon>
        <taxon>Bos</taxon>
    </lineage>
</organism>
<evidence type="ECO:0000250" key="1"/>
<evidence type="ECO:0000250" key="2">
    <source>
        <dbReference type="UniProtKB" id="Q4FZU3"/>
    </source>
</evidence>
<evidence type="ECO:0000250" key="3">
    <source>
        <dbReference type="UniProtKB" id="Q9H0G5"/>
    </source>
</evidence>
<evidence type="ECO:0000255" key="4"/>
<evidence type="ECO:0000256" key="5">
    <source>
        <dbReference type="SAM" id="MobiDB-lite"/>
    </source>
</evidence>
<evidence type="ECO:0000305" key="6"/>
<reference key="1">
    <citation type="submission" date="2006-01" db="EMBL/GenBank/DDBJ databases">
        <authorList>
            <consortium name="NIH - Mammalian Gene Collection (MGC) project"/>
        </authorList>
    </citation>
    <scope>NUCLEOTIDE SEQUENCE [LARGE SCALE MRNA]</scope>
    <source>
        <strain>Hereford</strain>
        <tissue>Hypothalamus</tissue>
    </source>
</reference>
<proteinExistence type="evidence at transcript level"/>
<gene>
    <name type="primary">NSRP1</name>
    <name type="synonym">CCDC55</name>
    <name type="synonym">NSRP70</name>
</gene>
<dbReference type="EMBL" id="BC112694">
    <property type="protein sequence ID" value="AAI12695.1"/>
    <property type="molecule type" value="mRNA"/>
</dbReference>
<dbReference type="RefSeq" id="NP_001039927.1">
    <property type="nucleotide sequence ID" value="NM_001046462.1"/>
</dbReference>
<dbReference type="SMR" id="Q2KIC0"/>
<dbReference type="FunCoup" id="Q2KIC0">
    <property type="interactions" value="3348"/>
</dbReference>
<dbReference type="STRING" id="9913.ENSBTAP00000025760"/>
<dbReference type="PaxDb" id="9913-ENSBTAP00000025760"/>
<dbReference type="GeneID" id="539841"/>
<dbReference type="KEGG" id="bta:539841"/>
<dbReference type="CTD" id="84081"/>
<dbReference type="VEuPathDB" id="HostDB:ENSBTAG00000019341"/>
<dbReference type="eggNOG" id="KOG2117">
    <property type="taxonomic scope" value="Eukaryota"/>
</dbReference>
<dbReference type="InParanoid" id="Q2KIC0"/>
<dbReference type="OMA" id="QSRDHEN"/>
<dbReference type="OrthoDB" id="446635at2759"/>
<dbReference type="Reactome" id="R-BTA-72163">
    <property type="pathway name" value="mRNA Splicing - Major Pathway"/>
</dbReference>
<dbReference type="Proteomes" id="UP000009136">
    <property type="component" value="Chromosome 19"/>
</dbReference>
<dbReference type="Bgee" id="ENSBTAG00000019341">
    <property type="expression patterns" value="Expressed in intramuscular adipose tissue and 105 other cell types or tissues"/>
</dbReference>
<dbReference type="GO" id="GO:0016607">
    <property type="term" value="C:nuclear speck"/>
    <property type="evidence" value="ECO:0000250"/>
    <property type="project" value="UniProtKB"/>
</dbReference>
<dbReference type="GO" id="GO:0005634">
    <property type="term" value="C:nucleus"/>
    <property type="evidence" value="ECO:0000250"/>
    <property type="project" value="UniProtKB"/>
</dbReference>
<dbReference type="GO" id="GO:1990904">
    <property type="term" value="C:ribonucleoprotein complex"/>
    <property type="evidence" value="ECO:0000250"/>
    <property type="project" value="UniProtKB"/>
</dbReference>
<dbReference type="GO" id="GO:0003729">
    <property type="term" value="F:mRNA binding"/>
    <property type="evidence" value="ECO:0000250"/>
    <property type="project" value="UniProtKB"/>
</dbReference>
<dbReference type="GO" id="GO:0032502">
    <property type="term" value="P:developmental process"/>
    <property type="evidence" value="ECO:0000250"/>
    <property type="project" value="UniProtKB"/>
</dbReference>
<dbReference type="GO" id="GO:0006397">
    <property type="term" value="P:mRNA processing"/>
    <property type="evidence" value="ECO:0007669"/>
    <property type="project" value="UniProtKB-KW"/>
</dbReference>
<dbReference type="GO" id="GO:0000381">
    <property type="term" value="P:regulation of alternative mRNA splicing, via spliceosome"/>
    <property type="evidence" value="ECO:0000250"/>
    <property type="project" value="UniProtKB"/>
</dbReference>
<dbReference type="GO" id="GO:0008380">
    <property type="term" value="P:RNA splicing"/>
    <property type="evidence" value="ECO:0007669"/>
    <property type="project" value="UniProtKB-KW"/>
</dbReference>
<dbReference type="InterPro" id="IPR046850">
    <property type="entry name" value="NRP1_C"/>
</dbReference>
<dbReference type="InterPro" id="IPR042816">
    <property type="entry name" value="Nsrp1"/>
</dbReference>
<dbReference type="InterPro" id="IPR018612">
    <property type="entry name" value="NSRP1_N"/>
</dbReference>
<dbReference type="PANTHER" id="PTHR31938">
    <property type="entry name" value="NUCLEAR SPECKLE SPLICING REGULATORY PROTEIN 1"/>
    <property type="match status" value="1"/>
</dbReference>
<dbReference type="PANTHER" id="PTHR31938:SF4">
    <property type="entry name" value="NUCLEAR SPECKLE SPLICING REGULATORY PROTEIN 1"/>
    <property type="match status" value="1"/>
</dbReference>
<dbReference type="Pfam" id="PF20427">
    <property type="entry name" value="NRP1_C"/>
    <property type="match status" value="1"/>
</dbReference>
<dbReference type="Pfam" id="PF09745">
    <property type="entry name" value="NSRP1_N"/>
    <property type="match status" value="1"/>
</dbReference>
<name>NSRP1_BOVIN</name>
<accession>Q2KIC0</accession>